<evidence type="ECO:0000255" key="1">
    <source>
        <dbReference type="HAMAP-Rule" id="MF_01328"/>
    </source>
</evidence>
<evidence type="ECO:0000256" key="2">
    <source>
        <dbReference type="SAM" id="MobiDB-lite"/>
    </source>
</evidence>
<evidence type="ECO:0000305" key="3"/>
<feature type="chain" id="PRO_1000166000" description="Large ribosomal subunit protein uL4">
    <location>
        <begin position="1"/>
        <end position="210"/>
    </location>
</feature>
<feature type="region of interest" description="Disordered" evidence="2">
    <location>
        <begin position="41"/>
        <end position="79"/>
    </location>
</feature>
<feature type="compositionally biased region" description="Polar residues" evidence="2">
    <location>
        <begin position="43"/>
        <end position="52"/>
    </location>
</feature>
<feature type="compositionally biased region" description="Basic residues" evidence="2">
    <location>
        <begin position="60"/>
        <end position="71"/>
    </location>
</feature>
<organism>
    <name type="scientific">Cyanothece sp. (strain PCC 7425 / ATCC 29141)</name>
    <dbReference type="NCBI Taxonomy" id="395961"/>
    <lineage>
        <taxon>Bacteria</taxon>
        <taxon>Bacillati</taxon>
        <taxon>Cyanobacteriota</taxon>
        <taxon>Cyanophyceae</taxon>
        <taxon>Gomontiellales</taxon>
        <taxon>Cyanothecaceae</taxon>
        <taxon>Cyanothece</taxon>
    </lineage>
</organism>
<sequence>MVACVIKDWQGSEVGETALELRVAKAENAAHIVHRALRRQMANARQGTASTKTRAEVRGGGRKPWRQKGTGRARAGSNRSPLWRGGGVIFGPKPRDYSIKMNYKERRLALRTALISRSDSLIVVEDFSDKLPRPKTKELAAAIARWGVQPNDKVLLIVADKQDTIYLSARNIATVKLIQATSLNVFDLLNADWIVATVEALGKIQEVYGG</sequence>
<proteinExistence type="inferred from homology"/>
<accession>B8HMQ5</accession>
<reference key="1">
    <citation type="journal article" date="2011" name="MBio">
        <title>Novel metabolic attributes of the genus Cyanothece, comprising a group of unicellular nitrogen-fixing Cyanobacteria.</title>
        <authorList>
            <person name="Bandyopadhyay A."/>
            <person name="Elvitigala T."/>
            <person name="Welsh E."/>
            <person name="Stockel J."/>
            <person name="Liberton M."/>
            <person name="Min H."/>
            <person name="Sherman L.A."/>
            <person name="Pakrasi H.B."/>
        </authorList>
    </citation>
    <scope>NUCLEOTIDE SEQUENCE [LARGE SCALE GENOMIC DNA]</scope>
    <source>
        <strain>PCC 7425 / ATCC 29141</strain>
    </source>
</reference>
<dbReference type="EMBL" id="CP001344">
    <property type="protein sequence ID" value="ACL43670.1"/>
    <property type="molecule type" value="Genomic_DNA"/>
</dbReference>
<dbReference type="SMR" id="B8HMQ5"/>
<dbReference type="STRING" id="395961.Cyan7425_1293"/>
<dbReference type="KEGG" id="cyn:Cyan7425_1293"/>
<dbReference type="eggNOG" id="COG0088">
    <property type="taxonomic scope" value="Bacteria"/>
</dbReference>
<dbReference type="HOGENOM" id="CLU_041575_5_2_3"/>
<dbReference type="OrthoDB" id="9803201at2"/>
<dbReference type="GO" id="GO:1990904">
    <property type="term" value="C:ribonucleoprotein complex"/>
    <property type="evidence" value="ECO:0007669"/>
    <property type="project" value="UniProtKB-KW"/>
</dbReference>
<dbReference type="GO" id="GO:0005840">
    <property type="term" value="C:ribosome"/>
    <property type="evidence" value="ECO:0007669"/>
    <property type="project" value="UniProtKB-KW"/>
</dbReference>
<dbReference type="GO" id="GO:0019843">
    <property type="term" value="F:rRNA binding"/>
    <property type="evidence" value="ECO:0007669"/>
    <property type="project" value="UniProtKB-UniRule"/>
</dbReference>
<dbReference type="GO" id="GO:0003735">
    <property type="term" value="F:structural constituent of ribosome"/>
    <property type="evidence" value="ECO:0007669"/>
    <property type="project" value="InterPro"/>
</dbReference>
<dbReference type="GO" id="GO:0006412">
    <property type="term" value="P:translation"/>
    <property type="evidence" value="ECO:0007669"/>
    <property type="project" value="UniProtKB-UniRule"/>
</dbReference>
<dbReference type="Gene3D" id="3.40.1370.10">
    <property type="match status" value="1"/>
</dbReference>
<dbReference type="HAMAP" id="MF_01328_B">
    <property type="entry name" value="Ribosomal_uL4_B"/>
    <property type="match status" value="1"/>
</dbReference>
<dbReference type="InterPro" id="IPR002136">
    <property type="entry name" value="Ribosomal_uL4"/>
</dbReference>
<dbReference type="InterPro" id="IPR013005">
    <property type="entry name" value="Ribosomal_uL4-like"/>
</dbReference>
<dbReference type="InterPro" id="IPR023574">
    <property type="entry name" value="Ribosomal_uL4_dom_sf"/>
</dbReference>
<dbReference type="NCBIfam" id="TIGR03953">
    <property type="entry name" value="rplD_bact"/>
    <property type="match status" value="1"/>
</dbReference>
<dbReference type="PANTHER" id="PTHR10746">
    <property type="entry name" value="50S RIBOSOMAL PROTEIN L4"/>
    <property type="match status" value="1"/>
</dbReference>
<dbReference type="PANTHER" id="PTHR10746:SF17">
    <property type="entry name" value="LARGE RIBOSOMAL SUBUNIT PROTEIN UL4C"/>
    <property type="match status" value="1"/>
</dbReference>
<dbReference type="Pfam" id="PF00573">
    <property type="entry name" value="Ribosomal_L4"/>
    <property type="match status" value="1"/>
</dbReference>
<dbReference type="SUPFAM" id="SSF52166">
    <property type="entry name" value="Ribosomal protein L4"/>
    <property type="match status" value="1"/>
</dbReference>
<gene>
    <name evidence="1" type="primary">rplD</name>
    <name evidence="1" type="synonym">rpl4</name>
    <name type="ordered locus">Cyan7425_1293</name>
</gene>
<comment type="function">
    <text evidence="1">One of the primary rRNA binding proteins, this protein initially binds near the 5'-end of the 23S rRNA. It is important during the early stages of 50S assembly. It makes multiple contacts with different domains of the 23S rRNA in the assembled 50S subunit and ribosome.</text>
</comment>
<comment type="function">
    <text evidence="1">Forms part of the polypeptide exit tunnel.</text>
</comment>
<comment type="subunit">
    <text evidence="1">Part of the 50S ribosomal subunit.</text>
</comment>
<comment type="similarity">
    <text evidence="1">Belongs to the universal ribosomal protein uL4 family.</text>
</comment>
<name>RL4_CYAP4</name>
<keyword id="KW-0687">Ribonucleoprotein</keyword>
<keyword id="KW-0689">Ribosomal protein</keyword>
<keyword id="KW-0694">RNA-binding</keyword>
<keyword id="KW-0699">rRNA-binding</keyword>
<protein>
    <recommendedName>
        <fullName evidence="1">Large ribosomal subunit protein uL4</fullName>
    </recommendedName>
    <alternativeName>
        <fullName evidence="3">50S ribosomal protein L4</fullName>
    </alternativeName>
</protein>